<feature type="chain" id="PRO_0000102599" description="Omega-gliadin">
    <location>
        <begin position="1"/>
        <end position="28" status="greater than"/>
    </location>
</feature>
<feature type="region of interest" description="Disordered" evidence="1">
    <location>
        <begin position="1"/>
        <end position="28"/>
    </location>
</feature>
<feature type="compositionally biased region" description="Low complexity" evidence="1">
    <location>
        <begin position="9"/>
        <end position="20"/>
    </location>
</feature>
<feature type="non-terminal residue">
    <location>
        <position position="28"/>
    </location>
</feature>
<sequence>ARQLNPSDQELQSPQQLYPQQPYPQQPY</sequence>
<dbReference type="PIR" id="A03356">
    <property type="entry name" value="A03356"/>
</dbReference>
<dbReference type="GO" id="GO:0005737">
    <property type="term" value="C:cytoplasm"/>
    <property type="evidence" value="ECO:0000314"/>
    <property type="project" value="CAFA"/>
</dbReference>
<dbReference type="GO" id="GO:0045735">
    <property type="term" value="F:nutrient reservoir activity"/>
    <property type="evidence" value="ECO:0007669"/>
    <property type="project" value="UniProtKB-KW"/>
</dbReference>
<name>GDO_TRIMO</name>
<evidence type="ECO:0000256" key="1">
    <source>
        <dbReference type="SAM" id="MobiDB-lite"/>
    </source>
</evidence>
<accession>P02865</accession>
<proteinExistence type="evidence at protein level"/>
<protein>
    <recommendedName>
        <fullName>Omega-gliadin</fullName>
    </recommendedName>
</protein>
<organism>
    <name type="scientific">Triticum monococcum</name>
    <name type="common">Einkorn wheat</name>
    <name type="synonym">Crithodium monococcum</name>
    <dbReference type="NCBI Taxonomy" id="4568"/>
    <lineage>
        <taxon>Eukaryota</taxon>
        <taxon>Viridiplantae</taxon>
        <taxon>Streptophyta</taxon>
        <taxon>Embryophyta</taxon>
        <taxon>Tracheophyta</taxon>
        <taxon>Spermatophyta</taxon>
        <taxon>Magnoliopsida</taxon>
        <taxon>Liliopsida</taxon>
        <taxon>Poales</taxon>
        <taxon>Poaceae</taxon>
        <taxon>BOP clade</taxon>
        <taxon>Pooideae</taxon>
        <taxon>Triticodae</taxon>
        <taxon>Triticeae</taxon>
        <taxon>Triticinae</taxon>
        <taxon>Triticum</taxon>
    </lineage>
</organism>
<reference key="1">
    <citation type="journal article" date="1980" name="Nature">
        <title>N-terminal amino acid sequence homology of storage protein components from barley and a diploid wheat.</title>
        <authorList>
            <person name="Shewry P.R."/>
            <person name="Autran J.-C."/>
            <person name="Nimmo C.C."/>
            <person name="Lew E.J.-L."/>
            <person name="Kasarda D.D."/>
        </authorList>
    </citation>
    <scope>PROTEIN SEQUENCE</scope>
</reference>
<keyword id="KW-0903">Direct protein sequencing</keyword>
<keyword id="KW-0708">Seed storage protein</keyword>
<keyword id="KW-0758">Storage protein</keyword>